<proteinExistence type="inferred from homology"/>
<protein>
    <recommendedName>
        <fullName evidence="1">Phosphoribosyl-AMP cyclohydrolase</fullName>
        <shortName evidence="1">PRA-CH</shortName>
        <ecNumber evidence="1">3.5.4.19</ecNumber>
    </recommendedName>
</protein>
<gene>
    <name evidence="1" type="primary">hisI</name>
    <name type="ordered locus">MJ1430</name>
</gene>
<sequence length="127" mass="14926">MDVEDTVKKLNLKFRNIEGERLILAITCDENKNVLMVAFMNEEALKKTLETGYMHYYSTSRKKLWRKGEESGNVQKLIKFYRDCDGDALLFIVEQKGVACHEGYYSCFHYKIEDGELKITGEYYSKR</sequence>
<organism>
    <name type="scientific">Methanocaldococcus jannaschii (strain ATCC 43067 / DSM 2661 / JAL-1 / JCM 10045 / NBRC 100440)</name>
    <name type="common">Methanococcus jannaschii</name>
    <dbReference type="NCBI Taxonomy" id="243232"/>
    <lineage>
        <taxon>Archaea</taxon>
        <taxon>Methanobacteriati</taxon>
        <taxon>Methanobacteriota</taxon>
        <taxon>Methanomada group</taxon>
        <taxon>Methanococci</taxon>
        <taxon>Methanococcales</taxon>
        <taxon>Methanocaldococcaceae</taxon>
        <taxon>Methanocaldococcus</taxon>
    </lineage>
</organism>
<keyword id="KW-0028">Amino-acid biosynthesis</keyword>
<keyword id="KW-0963">Cytoplasm</keyword>
<keyword id="KW-0368">Histidine biosynthesis</keyword>
<keyword id="KW-0378">Hydrolase</keyword>
<keyword id="KW-0460">Magnesium</keyword>
<keyword id="KW-0479">Metal-binding</keyword>
<keyword id="KW-1185">Reference proteome</keyword>
<keyword id="KW-0862">Zinc</keyword>
<feature type="chain" id="PRO_0000136507" description="Phosphoribosyl-AMP cyclohydrolase">
    <location>
        <begin position="1"/>
        <end position="127"/>
    </location>
</feature>
<feature type="binding site" evidence="1">
    <location>
        <position position="83"/>
    </location>
    <ligand>
        <name>Mg(2+)</name>
        <dbReference type="ChEBI" id="CHEBI:18420"/>
    </ligand>
</feature>
<feature type="binding site" evidence="1">
    <location>
        <position position="84"/>
    </location>
    <ligand>
        <name>Zn(2+)</name>
        <dbReference type="ChEBI" id="CHEBI:29105"/>
        <note>ligand shared between dimeric partners</note>
    </ligand>
</feature>
<feature type="binding site" evidence="1">
    <location>
        <position position="85"/>
    </location>
    <ligand>
        <name>Mg(2+)</name>
        <dbReference type="ChEBI" id="CHEBI:18420"/>
    </ligand>
</feature>
<feature type="binding site" evidence="1">
    <location>
        <position position="87"/>
    </location>
    <ligand>
        <name>Mg(2+)</name>
        <dbReference type="ChEBI" id="CHEBI:18420"/>
    </ligand>
</feature>
<feature type="binding site" evidence="1">
    <location>
        <position position="100"/>
    </location>
    <ligand>
        <name>Zn(2+)</name>
        <dbReference type="ChEBI" id="CHEBI:29105"/>
        <note>ligand shared between dimeric partners</note>
    </ligand>
</feature>
<feature type="binding site" evidence="1">
    <location>
        <position position="107"/>
    </location>
    <ligand>
        <name>Zn(2+)</name>
        <dbReference type="ChEBI" id="CHEBI:29105"/>
        <note>ligand shared between dimeric partners</note>
    </ligand>
</feature>
<reference key="1">
    <citation type="journal article" date="1996" name="Science">
        <title>Complete genome sequence of the methanogenic archaeon, Methanococcus jannaschii.</title>
        <authorList>
            <person name="Bult C.J."/>
            <person name="White O."/>
            <person name="Olsen G.J."/>
            <person name="Zhou L."/>
            <person name="Fleischmann R.D."/>
            <person name="Sutton G.G."/>
            <person name="Blake J.A."/>
            <person name="FitzGerald L.M."/>
            <person name="Clayton R.A."/>
            <person name="Gocayne J.D."/>
            <person name="Kerlavage A.R."/>
            <person name="Dougherty B.A."/>
            <person name="Tomb J.-F."/>
            <person name="Adams M.D."/>
            <person name="Reich C.I."/>
            <person name="Overbeek R."/>
            <person name="Kirkness E.F."/>
            <person name="Weinstock K.G."/>
            <person name="Merrick J.M."/>
            <person name="Glodek A."/>
            <person name="Scott J.L."/>
            <person name="Geoghagen N.S.M."/>
            <person name="Weidman J.F."/>
            <person name="Fuhrmann J.L."/>
            <person name="Nguyen D."/>
            <person name="Utterback T.R."/>
            <person name="Kelley J.M."/>
            <person name="Peterson J.D."/>
            <person name="Sadow P.W."/>
            <person name="Hanna M.C."/>
            <person name="Cotton M.D."/>
            <person name="Roberts K.M."/>
            <person name="Hurst M.A."/>
            <person name="Kaine B.P."/>
            <person name="Borodovsky M."/>
            <person name="Klenk H.-P."/>
            <person name="Fraser C.M."/>
            <person name="Smith H.O."/>
            <person name="Woese C.R."/>
            <person name="Venter J.C."/>
        </authorList>
    </citation>
    <scope>NUCLEOTIDE SEQUENCE [LARGE SCALE GENOMIC DNA]</scope>
    <source>
        <strain>ATCC 43067 / DSM 2661 / JAL-1 / JCM 10045 / NBRC 100440</strain>
    </source>
</reference>
<name>HIS3_METJA</name>
<comment type="function">
    <text evidence="1">Catalyzes the hydrolysis of the adenine ring of phosphoribosyl-AMP.</text>
</comment>
<comment type="catalytic activity">
    <reaction evidence="1">
        <text>1-(5-phospho-beta-D-ribosyl)-5'-AMP + H2O = 1-(5-phospho-beta-D-ribosyl)-5-[(5-phospho-beta-D-ribosylamino)methylideneamino]imidazole-4-carboxamide</text>
        <dbReference type="Rhea" id="RHEA:20049"/>
        <dbReference type="ChEBI" id="CHEBI:15377"/>
        <dbReference type="ChEBI" id="CHEBI:58435"/>
        <dbReference type="ChEBI" id="CHEBI:59457"/>
        <dbReference type="EC" id="3.5.4.19"/>
    </reaction>
</comment>
<comment type="cofactor">
    <cofactor evidence="1">
        <name>Mg(2+)</name>
        <dbReference type="ChEBI" id="CHEBI:18420"/>
    </cofactor>
    <text evidence="1">Binds 1 Mg(2+) ion per subunit.</text>
</comment>
<comment type="cofactor">
    <cofactor evidence="1">
        <name>Zn(2+)</name>
        <dbReference type="ChEBI" id="CHEBI:29105"/>
    </cofactor>
    <text evidence="1">Binds 1 zinc ion per subunit.</text>
</comment>
<comment type="pathway">
    <text evidence="1">Amino-acid biosynthesis; L-histidine biosynthesis; L-histidine from 5-phospho-alpha-D-ribose 1-diphosphate: step 3/9.</text>
</comment>
<comment type="subunit">
    <text evidence="1">Homodimer.</text>
</comment>
<comment type="subcellular location">
    <subcellularLocation>
        <location evidence="1">Cytoplasm</location>
    </subcellularLocation>
</comment>
<comment type="similarity">
    <text evidence="1">Belongs to the PRA-CH family.</text>
</comment>
<dbReference type="EC" id="3.5.4.19" evidence="1"/>
<dbReference type="EMBL" id="L77117">
    <property type="protein sequence ID" value="AAB99440.1"/>
    <property type="molecule type" value="Genomic_DNA"/>
</dbReference>
<dbReference type="PIR" id="E64478">
    <property type="entry name" value="E64478"/>
</dbReference>
<dbReference type="RefSeq" id="WP_010870948.1">
    <property type="nucleotide sequence ID" value="NC_000909.1"/>
</dbReference>
<dbReference type="SMR" id="Q58825"/>
<dbReference type="FunCoup" id="Q58825">
    <property type="interactions" value="93"/>
</dbReference>
<dbReference type="STRING" id="243232.MJ_1430"/>
<dbReference type="PaxDb" id="243232-MJ_1430"/>
<dbReference type="DNASU" id="1452334"/>
<dbReference type="EnsemblBacteria" id="AAB99440">
    <property type="protein sequence ID" value="AAB99440"/>
    <property type="gene ID" value="MJ_1430"/>
</dbReference>
<dbReference type="GeneID" id="1452334"/>
<dbReference type="KEGG" id="mja:MJ_1430"/>
<dbReference type="eggNOG" id="arCOG02676">
    <property type="taxonomic scope" value="Archaea"/>
</dbReference>
<dbReference type="HOGENOM" id="CLU_048577_5_3_2"/>
<dbReference type="InParanoid" id="Q58825"/>
<dbReference type="OrthoDB" id="5853at2157"/>
<dbReference type="PhylomeDB" id="Q58825"/>
<dbReference type="UniPathway" id="UPA00031">
    <property type="reaction ID" value="UER00008"/>
</dbReference>
<dbReference type="Proteomes" id="UP000000805">
    <property type="component" value="Chromosome"/>
</dbReference>
<dbReference type="GO" id="GO:0005737">
    <property type="term" value="C:cytoplasm"/>
    <property type="evidence" value="ECO:0007669"/>
    <property type="project" value="UniProtKB-SubCell"/>
</dbReference>
<dbReference type="GO" id="GO:0000287">
    <property type="term" value="F:magnesium ion binding"/>
    <property type="evidence" value="ECO:0007669"/>
    <property type="project" value="UniProtKB-UniRule"/>
</dbReference>
<dbReference type="GO" id="GO:0004635">
    <property type="term" value="F:phosphoribosyl-AMP cyclohydrolase activity"/>
    <property type="evidence" value="ECO:0007669"/>
    <property type="project" value="UniProtKB-UniRule"/>
</dbReference>
<dbReference type="GO" id="GO:0008270">
    <property type="term" value="F:zinc ion binding"/>
    <property type="evidence" value="ECO:0007669"/>
    <property type="project" value="UniProtKB-UniRule"/>
</dbReference>
<dbReference type="GO" id="GO:0000105">
    <property type="term" value="P:L-histidine biosynthetic process"/>
    <property type="evidence" value="ECO:0007669"/>
    <property type="project" value="UniProtKB-UniRule"/>
</dbReference>
<dbReference type="FunFam" id="3.10.20.810:FF:000001">
    <property type="entry name" value="Histidine biosynthesis bifunctional protein HisIE"/>
    <property type="match status" value="1"/>
</dbReference>
<dbReference type="Gene3D" id="3.10.20.810">
    <property type="entry name" value="Phosphoribosyl-AMP cyclohydrolase"/>
    <property type="match status" value="1"/>
</dbReference>
<dbReference type="HAMAP" id="MF_01021">
    <property type="entry name" value="HisI"/>
    <property type="match status" value="1"/>
</dbReference>
<dbReference type="InterPro" id="IPR026660">
    <property type="entry name" value="PRA-CH"/>
</dbReference>
<dbReference type="InterPro" id="IPR002496">
    <property type="entry name" value="PRib_AMP_CycHydrolase_dom"/>
</dbReference>
<dbReference type="InterPro" id="IPR038019">
    <property type="entry name" value="PRib_AMP_CycHydrolase_sf"/>
</dbReference>
<dbReference type="NCBIfam" id="NF000768">
    <property type="entry name" value="PRK00051.1"/>
    <property type="match status" value="1"/>
</dbReference>
<dbReference type="PANTHER" id="PTHR42945">
    <property type="entry name" value="HISTIDINE BIOSYNTHESIS BIFUNCTIONAL PROTEIN"/>
    <property type="match status" value="1"/>
</dbReference>
<dbReference type="PANTHER" id="PTHR42945:SF1">
    <property type="entry name" value="HISTIDINE BIOSYNTHESIS BIFUNCTIONAL PROTEIN HIS7"/>
    <property type="match status" value="1"/>
</dbReference>
<dbReference type="Pfam" id="PF01502">
    <property type="entry name" value="PRA-CH"/>
    <property type="match status" value="1"/>
</dbReference>
<dbReference type="SUPFAM" id="SSF141734">
    <property type="entry name" value="HisI-like"/>
    <property type="match status" value="1"/>
</dbReference>
<accession>Q58825</accession>
<evidence type="ECO:0000255" key="1">
    <source>
        <dbReference type="HAMAP-Rule" id="MF_01021"/>
    </source>
</evidence>